<comment type="subcellular location">
    <subcellularLocation>
        <location evidence="1">Secreted</location>
    </subcellularLocation>
</comment>
<comment type="tissue specificity">
    <text>Expressed by the venom gland.</text>
</comment>
<comment type="domain">
    <text evidence="1">The presence of a 'disulfide through disulfide knot' structurally defines this protein as a knottin.</text>
</comment>
<comment type="similarity">
    <text evidence="3">Belongs to the neurotoxin 19 (CSTX) family. 01 subfamily.</text>
</comment>
<reference key="1">
    <citation type="journal article" date="2010" name="Zoology">
        <title>Transcriptome analysis of the venom glands of the Chinese wolf spider Lycosa singoriensis.</title>
        <authorList>
            <person name="Zhang Y."/>
            <person name="Chen J."/>
            <person name="Tang X."/>
            <person name="Wang F."/>
            <person name="Jiang L."/>
            <person name="Xiong X."/>
            <person name="Wang M."/>
            <person name="Rong M."/>
            <person name="Liu Z."/>
            <person name="Liang S."/>
        </authorList>
    </citation>
    <scope>NUCLEOTIDE SEQUENCE [LARGE SCALE MRNA]</scope>
    <source>
        <tissue>Venom gland</tissue>
    </source>
</reference>
<proteinExistence type="evidence at transcript level"/>
<sequence>MKFVLLFGVLLVTLFSYSSAEMLDDFDQAVEDELLSLIEKEEARAKECTPRFYDCSHDRHSCCRSELFKDVCTCFYPEGGDNEVCTCQQPKHLKYMEKAADKAKKFGGKIKKWFG</sequence>
<dbReference type="EMBL" id="EU925990">
    <property type="protein sequence ID" value="ACI41322.1"/>
    <property type="molecule type" value="mRNA"/>
</dbReference>
<dbReference type="EMBL" id="FM863994">
    <property type="protein sequence ID" value="CAS03592.1"/>
    <property type="molecule type" value="mRNA"/>
</dbReference>
<dbReference type="SMR" id="B6DCQ6"/>
<dbReference type="ArachnoServer" id="AS000938">
    <property type="toxin name" value="U3-lycotoxin-Ls1a"/>
</dbReference>
<dbReference type="GO" id="GO:0005576">
    <property type="term" value="C:extracellular region"/>
    <property type="evidence" value="ECO:0007669"/>
    <property type="project" value="UniProtKB-SubCell"/>
</dbReference>
<dbReference type="GO" id="GO:0090729">
    <property type="term" value="F:toxin activity"/>
    <property type="evidence" value="ECO:0007669"/>
    <property type="project" value="UniProtKB-KW"/>
</dbReference>
<dbReference type="InterPro" id="IPR019553">
    <property type="entry name" value="Spider_toxin_CSTX_knottin"/>
</dbReference>
<dbReference type="InterPro" id="IPR011142">
    <property type="entry name" value="Spider_toxin_CSTX_Knottin_CS"/>
</dbReference>
<dbReference type="Pfam" id="PF10530">
    <property type="entry name" value="Toxin_35"/>
    <property type="match status" value="1"/>
</dbReference>
<dbReference type="PROSITE" id="PS60029">
    <property type="entry name" value="SPIDER_CSTX"/>
    <property type="match status" value="1"/>
</dbReference>
<evidence type="ECO:0000250" key="1"/>
<evidence type="ECO:0000255" key="2"/>
<evidence type="ECO:0000305" key="3"/>
<accession>B6DCQ6</accession>
<organism>
    <name type="scientific">Lycosa singoriensis</name>
    <name type="common">Wolf spider</name>
    <name type="synonym">Aranea singoriensis</name>
    <dbReference type="NCBI Taxonomy" id="434756"/>
    <lineage>
        <taxon>Eukaryota</taxon>
        <taxon>Metazoa</taxon>
        <taxon>Ecdysozoa</taxon>
        <taxon>Arthropoda</taxon>
        <taxon>Chelicerata</taxon>
        <taxon>Arachnida</taxon>
        <taxon>Araneae</taxon>
        <taxon>Araneomorphae</taxon>
        <taxon>Entelegynae</taxon>
        <taxon>Lycosoidea</taxon>
        <taxon>Lycosidae</taxon>
        <taxon>Lycosa</taxon>
    </lineage>
</organism>
<keyword id="KW-1015">Disulfide bond</keyword>
<keyword id="KW-0960">Knottin</keyword>
<keyword id="KW-0964">Secreted</keyword>
<keyword id="KW-0732">Signal</keyword>
<keyword id="KW-0800">Toxin</keyword>
<feature type="signal peptide" evidence="2">
    <location>
        <begin position="1"/>
        <end position="20"/>
    </location>
</feature>
<feature type="propeptide" id="PRO_0000401627" evidence="1">
    <location>
        <begin position="21"/>
        <end position="44"/>
    </location>
</feature>
<feature type="chain" id="PRO_0000401628" description="U3-lycotoxin-Ls1a">
    <location>
        <begin position="45"/>
        <end position="115"/>
    </location>
</feature>
<feature type="disulfide bond" evidence="1">
    <location>
        <begin position="48"/>
        <end position="63"/>
    </location>
</feature>
<feature type="disulfide bond" evidence="1">
    <location>
        <begin position="55"/>
        <end position="72"/>
    </location>
</feature>
<feature type="disulfide bond" evidence="1">
    <location>
        <begin position="62"/>
        <end position="87"/>
    </location>
</feature>
<feature type="disulfide bond" evidence="1">
    <location>
        <begin position="74"/>
        <end position="85"/>
    </location>
</feature>
<name>TX311_LYCSI</name>
<protein>
    <recommendedName>
        <fullName>U3-lycotoxin-Ls1a</fullName>
    </recommendedName>
    <alternativeName>
        <fullName>Toxin-like structure LSTX-B11</fullName>
    </alternativeName>
</protein>